<geneLocation type="mitochondrion"/>
<sequence>MANIRKSHPLLKIINHSLIDLPAPSNISTWWNFGSLLGICLGLQILTGLFLAMHYTSDTLTAFSSVTHICRDVNYGWIIRYLHANGASMFFICLFLHVGRGIYYGSYNYLETWNIGIILLFALMATAFMGYVLPWGQMSFWGATVITNLLSAIPYVGTSLVEWIWGGFSVDKATLTRFFAFHFILPFIITALVIVHLLFLHETGSNNPTGLDSNADKIPFHPYYTIKDILGFIIMFLFLMILVLFMPDMLGDPDNYTPANPLSTPPHIKPEWYFLFAYAILRSIPNKLGGVLALILSILILILMPLLHTSAQRSLMFRPIGQCLFWILVGDLFILTWIGGQPVEHPFIIIGQLASIMYFTIILILMPLAGILENKIMKL</sequence>
<name>CYB_MYOAS</name>
<protein>
    <recommendedName>
        <fullName>Cytochrome b</fullName>
    </recommendedName>
    <alternativeName>
        <fullName>Complex III subunit 3</fullName>
    </alternativeName>
    <alternativeName>
        <fullName>Complex III subunit III</fullName>
    </alternativeName>
    <alternativeName>
        <fullName>Cytochrome b-c1 complex subunit 3</fullName>
    </alternativeName>
    <alternativeName>
        <fullName>Ubiquinol-cytochrome-c reductase complex cytochrome b subunit</fullName>
    </alternativeName>
</protein>
<gene>
    <name type="primary">MT-CYB</name>
    <name type="synonym">COB</name>
    <name type="synonym">CYTB</name>
    <name type="synonym">MTCYB</name>
</gene>
<dbReference type="EMBL" id="AF326272">
    <property type="protein sequence ID" value="AAG48724.1"/>
    <property type="molecule type" value="Genomic_DNA"/>
</dbReference>
<dbReference type="SMR" id="Q9G3M9"/>
<dbReference type="GO" id="GO:0005743">
    <property type="term" value="C:mitochondrial inner membrane"/>
    <property type="evidence" value="ECO:0007669"/>
    <property type="project" value="UniProtKB-SubCell"/>
</dbReference>
<dbReference type="GO" id="GO:0045275">
    <property type="term" value="C:respiratory chain complex III"/>
    <property type="evidence" value="ECO:0007669"/>
    <property type="project" value="InterPro"/>
</dbReference>
<dbReference type="GO" id="GO:0046872">
    <property type="term" value="F:metal ion binding"/>
    <property type="evidence" value="ECO:0007669"/>
    <property type="project" value="UniProtKB-KW"/>
</dbReference>
<dbReference type="GO" id="GO:0008121">
    <property type="term" value="F:ubiquinol-cytochrome-c reductase activity"/>
    <property type="evidence" value="ECO:0007669"/>
    <property type="project" value="InterPro"/>
</dbReference>
<dbReference type="GO" id="GO:0006122">
    <property type="term" value="P:mitochondrial electron transport, ubiquinol to cytochrome c"/>
    <property type="evidence" value="ECO:0007669"/>
    <property type="project" value="TreeGrafter"/>
</dbReference>
<dbReference type="CDD" id="cd00290">
    <property type="entry name" value="cytochrome_b_C"/>
    <property type="match status" value="1"/>
</dbReference>
<dbReference type="CDD" id="cd00284">
    <property type="entry name" value="Cytochrome_b_N"/>
    <property type="match status" value="1"/>
</dbReference>
<dbReference type="FunFam" id="1.20.810.10:FF:000002">
    <property type="entry name" value="Cytochrome b"/>
    <property type="match status" value="1"/>
</dbReference>
<dbReference type="Gene3D" id="1.20.810.10">
    <property type="entry name" value="Cytochrome Bc1 Complex, Chain C"/>
    <property type="match status" value="1"/>
</dbReference>
<dbReference type="InterPro" id="IPR005798">
    <property type="entry name" value="Cyt_b/b6_C"/>
</dbReference>
<dbReference type="InterPro" id="IPR036150">
    <property type="entry name" value="Cyt_b/b6_C_sf"/>
</dbReference>
<dbReference type="InterPro" id="IPR005797">
    <property type="entry name" value="Cyt_b/b6_N"/>
</dbReference>
<dbReference type="InterPro" id="IPR027387">
    <property type="entry name" value="Cytb/b6-like_sf"/>
</dbReference>
<dbReference type="InterPro" id="IPR030689">
    <property type="entry name" value="Cytochrome_b"/>
</dbReference>
<dbReference type="InterPro" id="IPR048260">
    <property type="entry name" value="Cytochrome_b_C_euk/bac"/>
</dbReference>
<dbReference type="InterPro" id="IPR048259">
    <property type="entry name" value="Cytochrome_b_N_euk/bac"/>
</dbReference>
<dbReference type="InterPro" id="IPR016174">
    <property type="entry name" value="Di-haem_cyt_TM"/>
</dbReference>
<dbReference type="PANTHER" id="PTHR19271">
    <property type="entry name" value="CYTOCHROME B"/>
    <property type="match status" value="1"/>
</dbReference>
<dbReference type="PANTHER" id="PTHR19271:SF16">
    <property type="entry name" value="CYTOCHROME B"/>
    <property type="match status" value="1"/>
</dbReference>
<dbReference type="Pfam" id="PF00032">
    <property type="entry name" value="Cytochrom_B_C"/>
    <property type="match status" value="1"/>
</dbReference>
<dbReference type="Pfam" id="PF00033">
    <property type="entry name" value="Cytochrome_B"/>
    <property type="match status" value="1"/>
</dbReference>
<dbReference type="PIRSF" id="PIRSF038885">
    <property type="entry name" value="COB"/>
    <property type="match status" value="1"/>
</dbReference>
<dbReference type="SUPFAM" id="SSF81648">
    <property type="entry name" value="a domain/subunit of cytochrome bc1 complex (Ubiquinol-cytochrome c reductase)"/>
    <property type="match status" value="1"/>
</dbReference>
<dbReference type="SUPFAM" id="SSF81342">
    <property type="entry name" value="Transmembrane di-heme cytochromes"/>
    <property type="match status" value="1"/>
</dbReference>
<dbReference type="PROSITE" id="PS51003">
    <property type="entry name" value="CYTB_CTER"/>
    <property type="match status" value="1"/>
</dbReference>
<dbReference type="PROSITE" id="PS51002">
    <property type="entry name" value="CYTB_NTER"/>
    <property type="match status" value="1"/>
</dbReference>
<proteinExistence type="inferred from homology"/>
<accession>Q9G3M9</accession>
<reference key="1">
    <citation type="submission" date="2000-12" db="EMBL/GenBank/DDBJ databases">
        <title>Phylogeny and systematics of myospalacinae (rodentia) inferred from mitochondrial genes sequences.</title>
        <authorList>
            <person name="Zhou C.Q."/>
            <person name="Zhou K.Y."/>
            <person name="Wang Y.Q."/>
            <person name="Zhang S.L."/>
        </authorList>
    </citation>
    <scope>NUCLEOTIDE SEQUENCE [GENOMIC DNA]</scope>
</reference>
<feature type="chain" id="PRO_0000255099" description="Cytochrome b">
    <location>
        <begin position="1"/>
        <end position="379"/>
    </location>
</feature>
<feature type="transmembrane region" description="Helical" evidence="2">
    <location>
        <begin position="33"/>
        <end position="53"/>
    </location>
</feature>
<feature type="transmembrane region" description="Helical" evidence="2">
    <location>
        <begin position="77"/>
        <end position="98"/>
    </location>
</feature>
<feature type="transmembrane region" description="Helical" evidence="2">
    <location>
        <begin position="113"/>
        <end position="133"/>
    </location>
</feature>
<feature type="transmembrane region" description="Helical" evidence="2">
    <location>
        <begin position="178"/>
        <end position="198"/>
    </location>
</feature>
<feature type="transmembrane region" description="Helical" evidence="2">
    <location>
        <begin position="226"/>
        <end position="246"/>
    </location>
</feature>
<feature type="transmembrane region" description="Helical" evidence="2">
    <location>
        <begin position="288"/>
        <end position="308"/>
    </location>
</feature>
<feature type="transmembrane region" description="Helical" evidence="2">
    <location>
        <begin position="320"/>
        <end position="340"/>
    </location>
</feature>
<feature type="transmembrane region" description="Helical" evidence="2">
    <location>
        <begin position="347"/>
        <end position="367"/>
    </location>
</feature>
<feature type="binding site" description="axial binding residue" evidence="2">
    <location>
        <position position="83"/>
    </location>
    <ligand>
        <name>heme b</name>
        <dbReference type="ChEBI" id="CHEBI:60344"/>
        <label>b562</label>
    </ligand>
    <ligandPart>
        <name>Fe</name>
        <dbReference type="ChEBI" id="CHEBI:18248"/>
    </ligandPart>
</feature>
<feature type="binding site" description="axial binding residue" evidence="2">
    <location>
        <position position="97"/>
    </location>
    <ligand>
        <name>heme b</name>
        <dbReference type="ChEBI" id="CHEBI:60344"/>
        <label>b566</label>
    </ligand>
    <ligandPart>
        <name>Fe</name>
        <dbReference type="ChEBI" id="CHEBI:18248"/>
    </ligandPart>
</feature>
<feature type="binding site" description="axial binding residue" evidence="2">
    <location>
        <position position="182"/>
    </location>
    <ligand>
        <name>heme b</name>
        <dbReference type="ChEBI" id="CHEBI:60344"/>
        <label>b562</label>
    </ligand>
    <ligandPart>
        <name>Fe</name>
        <dbReference type="ChEBI" id="CHEBI:18248"/>
    </ligandPart>
</feature>
<feature type="binding site" description="axial binding residue" evidence="2">
    <location>
        <position position="196"/>
    </location>
    <ligand>
        <name>heme b</name>
        <dbReference type="ChEBI" id="CHEBI:60344"/>
        <label>b566</label>
    </ligand>
    <ligandPart>
        <name>Fe</name>
        <dbReference type="ChEBI" id="CHEBI:18248"/>
    </ligandPart>
</feature>
<feature type="binding site" evidence="2">
    <location>
        <position position="201"/>
    </location>
    <ligand>
        <name>a ubiquinone</name>
        <dbReference type="ChEBI" id="CHEBI:16389"/>
    </ligand>
</feature>
<organism>
    <name type="scientific">Myospalax aspalax</name>
    <name type="common">False zokor</name>
    <dbReference type="NCBI Taxonomy" id="213498"/>
    <lineage>
        <taxon>Eukaryota</taxon>
        <taxon>Metazoa</taxon>
        <taxon>Chordata</taxon>
        <taxon>Craniata</taxon>
        <taxon>Vertebrata</taxon>
        <taxon>Euteleostomi</taxon>
        <taxon>Mammalia</taxon>
        <taxon>Eutheria</taxon>
        <taxon>Euarchontoglires</taxon>
        <taxon>Glires</taxon>
        <taxon>Rodentia</taxon>
        <taxon>Myomorpha</taxon>
        <taxon>Muroidea</taxon>
        <taxon>Spalacidae</taxon>
        <taxon>Myospalacinae</taxon>
        <taxon>Myospalax</taxon>
    </lineage>
</organism>
<comment type="function">
    <text evidence="2">Component of the ubiquinol-cytochrome c reductase complex (complex III or cytochrome b-c1 complex) that is part of the mitochondrial respiratory chain. The b-c1 complex mediates electron transfer from ubiquinol to cytochrome c. Contributes to the generation of a proton gradient across the mitochondrial membrane that is then used for ATP synthesis.</text>
</comment>
<comment type="cofactor">
    <cofactor evidence="2">
        <name>heme b</name>
        <dbReference type="ChEBI" id="CHEBI:60344"/>
    </cofactor>
    <text evidence="2">Binds 2 heme b groups non-covalently.</text>
</comment>
<comment type="subunit">
    <text evidence="2">The cytochrome bc1 complex contains 11 subunits: 3 respiratory subunits (MT-CYB, CYC1 and UQCRFS1), 2 core proteins (UQCRC1 and UQCRC2) and 6 low-molecular weight proteins (UQCRH/QCR6, UQCRB/QCR7, UQCRQ/QCR8, UQCR10/QCR9, UQCR11/QCR10 and a cleavage product of UQCRFS1). This cytochrome bc1 complex then forms a dimer.</text>
</comment>
<comment type="subcellular location">
    <subcellularLocation>
        <location evidence="2">Mitochondrion inner membrane</location>
        <topology evidence="2">Multi-pass membrane protein</topology>
    </subcellularLocation>
</comment>
<comment type="miscellaneous">
    <text evidence="1">Heme 1 (or BL or b562) is low-potential and absorbs at about 562 nm, and heme 2 (or BH or b566) is high-potential and absorbs at about 566 nm.</text>
</comment>
<comment type="similarity">
    <text evidence="3 4">Belongs to the cytochrome b family.</text>
</comment>
<comment type="caution">
    <text evidence="2">The full-length protein contains only eight transmembrane helices, not nine as predicted by bioinformatics tools.</text>
</comment>
<keyword id="KW-0249">Electron transport</keyword>
<keyword id="KW-0349">Heme</keyword>
<keyword id="KW-0408">Iron</keyword>
<keyword id="KW-0472">Membrane</keyword>
<keyword id="KW-0479">Metal-binding</keyword>
<keyword id="KW-0496">Mitochondrion</keyword>
<keyword id="KW-0999">Mitochondrion inner membrane</keyword>
<keyword id="KW-0679">Respiratory chain</keyword>
<keyword id="KW-0812">Transmembrane</keyword>
<keyword id="KW-1133">Transmembrane helix</keyword>
<keyword id="KW-0813">Transport</keyword>
<keyword id="KW-0830">Ubiquinone</keyword>
<evidence type="ECO:0000250" key="1"/>
<evidence type="ECO:0000250" key="2">
    <source>
        <dbReference type="UniProtKB" id="P00157"/>
    </source>
</evidence>
<evidence type="ECO:0000255" key="3">
    <source>
        <dbReference type="PROSITE-ProRule" id="PRU00967"/>
    </source>
</evidence>
<evidence type="ECO:0000255" key="4">
    <source>
        <dbReference type="PROSITE-ProRule" id="PRU00968"/>
    </source>
</evidence>